<sequence>MNDSVTLRTRKFMTNRLLQRKQMVLDVLHPGKATVPKTEIREKLAKMYKTTPDVVFVFGFKTQFGGGKTTGFAMVYDSLDYAKKNEPKYRLARHGLYEKKKTSRKQRKERKNRMKKVRGTKKASVGAAGKK</sequence>
<protein>
    <recommendedName>
        <fullName evidence="3">Small ribosomal subunit protein eS24</fullName>
    </recommendedName>
    <alternativeName>
        <fullName>40S ribosomal protein S24</fullName>
    </alternativeName>
</protein>
<name>RS24_ICTPU</name>
<organism>
    <name type="scientific">Ictalurus punctatus</name>
    <name type="common">Channel catfish</name>
    <name type="synonym">Silurus punctatus</name>
    <dbReference type="NCBI Taxonomy" id="7998"/>
    <lineage>
        <taxon>Eukaryota</taxon>
        <taxon>Metazoa</taxon>
        <taxon>Chordata</taxon>
        <taxon>Craniata</taxon>
        <taxon>Vertebrata</taxon>
        <taxon>Euteleostomi</taxon>
        <taxon>Actinopterygii</taxon>
        <taxon>Neopterygii</taxon>
        <taxon>Teleostei</taxon>
        <taxon>Ostariophysi</taxon>
        <taxon>Siluriformes</taxon>
        <taxon>Ictaluridae</taxon>
        <taxon>Ictalurus</taxon>
    </lineage>
</organism>
<evidence type="ECO:0000250" key="1">
    <source>
        <dbReference type="UniProtKB" id="P62847"/>
    </source>
</evidence>
<evidence type="ECO:0000256" key="2">
    <source>
        <dbReference type="SAM" id="MobiDB-lite"/>
    </source>
</evidence>
<evidence type="ECO:0000305" key="3"/>
<gene>
    <name type="primary">rps24</name>
</gene>
<reference key="1">
    <citation type="journal article" date="2002" name="Gene">
        <title>Translational machinery of channel catfish: I. A transcriptomic approach to the analysis of 32 40S ribosomal protein genes and their expression.</title>
        <authorList>
            <person name="Karsi A."/>
            <person name="Patterson A."/>
            <person name="Feng J."/>
            <person name="Liu Z.-J."/>
        </authorList>
    </citation>
    <scope>NUCLEOTIDE SEQUENCE [MRNA]</scope>
</reference>
<feature type="chain" id="PRO_0000137628" description="Small ribosomal subunit protein eS24">
    <location>
        <begin position="1"/>
        <end position="131"/>
    </location>
</feature>
<feature type="region of interest" description="Disordered" evidence="2">
    <location>
        <begin position="93"/>
        <end position="131"/>
    </location>
</feature>
<feature type="compositionally biased region" description="Basic residues" evidence="2">
    <location>
        <begin position="101"/>
        <end position="121"/>
    </location>
</feature>
<accession>Q90YQ0</accession>
<dbReference type="EMBL" id="AF402832">
    <property type="protein sequence ID" value="AAK95206.1"/>
    <property type="molecule type" value="mRNA"/>
</dbReference>
<dbReference type="RefSeq" id="NP_001187246.1">
    <property type="nucleotide sequence ID" value="NM_001200317.1"/>
</dbReference>
<dbReference type="SMR" id="Q90YQ0"/>
<dbReference type="STRING" id="7998.ENSIPUP00000036874"/>
<dbReference type="OMA" id="IRVKKYM"/>
<dbReference type="Proteomes" id="UP000221080">
    <property type="component" value="Unplaced"/>
</dbReference>
<dbReference type="GO" id="GO:0005737">
    <property type="term" value="C:cytoplasm"/>
    <property type="evidence" value="ECO:0007669"/>
    <property type="project" value="UniProtKB-SubCell"/>
</dbReference>
<dbReference type="GO" id="GO:0005730">
    <property type="term" value="C:nucleolus"/>
    <property type="evidence" value="ECO:0007669"/>
    <property type="project" value="UniProtKB-SubCell"/>
</dbReference>
<dbReference type="GO" id="GO:0044391">
    <property type="term" value="C:ribosomal subunit"/>
    <property type="evidence" value="ECO:0007669"/>
    <property type="project" value="UniProtKB-ARBA"/>
</dbReference>
<dbReference type="GO" id="GO:0032040">
    <property type="term" value="C:small-subunit processome"/>
    <property type="evidence" value="ECO:0000250"/>
    <property type="project" value="UniProtKB"/>
</dbReference>
<dbReference type="GO" id="GO:0003735">
    <property type="term" value="F:structural constituent of ribosome"/>
    <property type="evidence" value="ECO:0007669"/>
    <property type="project" value="InterPro"/>
</dbReference>
<dbReference type="GO" id="GO:0042274">
    <property type="term" value="P:ribosomal small subunit biogenesis"/>
    <property type="evidence" value="ECO:0000250"/>
    <property type="project" value="UniProtKB"/>
</dbReference>
<dbReference type="GO" id="GO:0006412">
    <property type="term" value="P:translation"/>
    <property type="evidence" value="ECO:0007669"/>
    <property type="project" value="InterPro"/>
</dbReference>
<dbReference type="FunFam" id="3.30.70.3370:FF:000001">
    <property type="entry name" value="40S ribosomal protein S24"/>
    <property type="match status" value="1"/>
</dbReference>
<dbReference type="Gene3D" id="3.30.70.3370">
    <property type="match status" value="1"/>
</dbReference>
<dbReference type="HAMAP" id="MF_00545">
    <property type="entry name" value="Ribosomal_eS24"/>
    <property type="match status" value="1"/>
</dbReference>
<dbReference type="InterPro" id="IPR053709">
    <property type="entry name" value="eRP_eS24_sf"/>
</dbReference>
<dbReference type="InterPro" id="IPR001976">
    <property type="entry name" value="Ribosomal_eS24"/>
</dbReference>
<dbReference type="InterPro" id="IPR018098">
    <property type="entry name" value="Ribosomal_eS24_CS"/>
</dbReference>
<dbReference type="InterPro" id="IPR012678">
    <property type="entry name" value="Ribosomal_uL23/eL15/eS24_sf"/>
</dbReference>
<dbReference type="PANTHER" id="PTHR10496">
    <property type="entry name" value="40S RIBOSOMAL PROTEIN S24"/>
    <property type="match status" value="1"/>
</dbReference>
<dbReference type="Pfam" id="PF01282">
    <property type="entry name" value="Ribosomal_S24e"/>
    <property type="match status" value="1"/>
</dbReference>
<dbReference type="SUPFAM" id="SSF54189">
    <property type="entry name" value="Ribosomal proteins S24e, L23 and L15e"/>
    <property type="match status" value="1"/>
</dbReference>
<dbReference type="PROSITE" id="PS00529">
    <property type="entry name" value="RIBOSOMAL_S24E"/>
    <property type="match status" value="1"/>
</dbReference>
<comment type="function">
    <text evidence="1">Component of the small ribosomal subunit. The ribosome is a large ribonucleoprotein complex responsible for the synthesis of proteins in the cell. Required for processing of pre-rRNA and maturation of 40S ribosomal subunits. Part of the small subunit (SSU) processome, first precursor of the small eukaryotic ribosomal subunit. During the assembly of the SSU processome in the nucleolus, many ribosome biogenesis factors, an RNA chaperone and ribosomal proteins associate with the nascent pre-rRNA and work in concert to generate RNA folding, modifications, rearrangements and cleavage as well as targeted degradation of pre-ribosomal RNA by the RNA exosome.</text>
</comment>
<comment type="subunit">
    <text evidence="1">Component of the small ribosomal subunit. Part of the small subunit (SSU) processome, composed of more than 70 proteins and the RNA chaperone small nucleolar RNA (snoRNA) U3.</text>
</comment>
<comment type="subcellular location">
    <subcellularLocation>
        <location evidence="1">Cytoplasm</location>
    </subcellularLocation>
    <subcellularLocation>
        <location evidence="1">Nucleus</location>
        <location evidence="1">Nucleolus</location>
    </subcellularLocation>
</comment>
<comment type="similarity">
    <text evidence="3">Belongs to the eukaryotic ribosomal protein eS24 family.</text>
</comment>
<proteinExistence type="evidence at transcript level"/>
<keyword id="KW-0963">Cytoplasm</keyword>
<keyword id="KW-0539">Nucleus</keyword>
<keyword id="KW-0687">Ribonucleoprotein</keyword>
<keyword id="KW-0689">Ribosomal protein</keyword>